<comment type="function">
    <text evidence="1">Involved in allosteric regulation of aspartate carbamoyltransferase.</text>
</comment>
<comment type="cofactor">
    <cofactor evidence="1">
        <name>Zn(2+)</name>
        <dbReference type="ChEBI" id="CHEBI:29105"/>
    </cofactor>
    <text evidence="1">Binds 1 zinc ion per subunit.</text>
</comment>
<comment type="subunit">
    <text evidence="1">Contains catalytic and regulatory chains.</text>
</comment>
<comment type="similarity">
    <text evidence="1">Belongs to the PyrI family.</text>
</comment>
<proteinExistence type="inferred from homology"/>
<feature type="chain" id="PRO_1000088844" description="Aspartate carbamoyltransferase regulatory chain">
    <location>
        <begin position="1"/>
        <end position="154"/>
    </location>
</feature>
<feature type="binding site" evidence="1">
    <location>
        <position position="109"/>
    </location>
    <ligand>
        <name>Zn(2+)</name>
        <dbReference type="ChEBI" id="CHEBI:29105"/>
    </ligand>
</feature>
<feature type="binding site" evidence="1">
    <location>
        <position position="114"/>
    </location>
    <ligand>
        <name>Zn(2+)</name>
        <dbReference type="ChEBI" id="CHEBI:29105"/>
    </ligand>
</feature>
<feature type="binding site" evidence="1">
    <location>
        <position position="138"/>
    </location>
    <ligand>
        <name>Zn(2+)</name>
        <dbReference type="ChEBI" id="CHEBI:29105"/>
    </ligand>
</feature>
<feature type="binding site" evidence="1">
    <location>
        <position position="141"/>
    </location>
    <ligand>
        <name>Zn(2+)</name>
        <dbReference type="ChEBI" id="CHEBI:29105"/>
    </ligand>
</feature>
<gene>
    <name evidence="1" type="primary">pyrI</name>
    <name type="ordered locus">VFMJ11_0395</name>
</gene>
<keyword id="KW-0479">Metal-binding</keyword>
<keyword id="KW-0665">Pyrimidine biosynthesis</keyword>
<keyword id="KW-0862">Zinc</keyword>
<reference key="1">
    <citation type="submission" date="2008-08" db="EMBL/GenBank/DDBJ databases">
        <title>Complete sequence of Vibrio fischeri strain MJ11.</title>
        <authorList>
            <person name="Mandel M.J."/>
            <person name="Stabb E.V."/>
            <person name="Ruby E.G."/>
            <person name="Ferriera S."/>
            <person name="Johnson J."/>
            <person name="Kravitz S."/>
            <person name="Beeson K."/>
            <person name="Sutton G."/>
            <person name="Rogers Y.-H."/>
            <person name="Friedman R."/>
            <person name="Frazier M."/>
            <person name="Venter J.C."/>
        </authorList>
    </citation>
    <scope>NUCLEOTIDE SEQUENCE [LARGE SCALE GENOMIC DNA]</scope>
    <source>
        <strain>MJ11</strain>
    </source>
</reference>
<protein>
    <recommendedName>
        <fullName evidence="1">Aspartate carbamoyltransferase regulatory chain</fullName>
    </recommendedName>
</protein>
<dbReference type="EMBL" id="CP001139">
    <property type="protein sequence ID" value="ACH65836.1"/>
    <property type="molecule type" value="Genomic_DNA"/>
</dbReference>
<dbReference type="RefSeq" id="WP_011261195.1">
    <property type="nucleotide sequence ID" value="NC_011184.1"/>
</dbReference>
<dbReference type="SMR" id="B5F9P8"/>
<dbReference type="GeneID" id="54163032"/>
<dbReference type="KEGG" id="vfm:VFMJ11_0395"/>
<dbReference type="HOGENOM" id="CLU_128576_0_0_6"/>
<dbReference type="Proteomes" id="UP000001857">
    <property type="component" value="Chromosome I"/>
</dbReference>
<dbReference type="GO" id="GO:0009347">
    <property type="term" value="C:aspartate carbamoyltransferase complex"/>
    <property type="evidence" value="ECO:0007669"/>
    <property type="project" value="InterPro"/>
</dbReference>
<dbReference type="GO" id="GO:0046872">
    <property type="term" value="F:metal ion binding"/>
    <property type="evidence" value="ECO:0007669"/>
    <property type="project" value="UniProtKB-KW"/>
</dbReference>
<dbReference type="GO" id="GO:0006207">
    <property type="term" value="P:'de novo' pyrimidine nucleobase biosynthetic process"/>
    <property type="evidence" value="ECO:0007669"/>
    <property type="project" value="InterPro"/>
</dbReference>
<dbReference type="GO" id="GO:0006221">
    <property type="term" value="P:pyrimidine nucleotide biosynthetic process"/>
    <property type="evidence" value="ECO:0007669"/>
    <property type="project" value="UniProtKB-UniRule"/>
</dbReference>
<dbReference type="Gene3D" id="2.30.30.20">
    <property type="entry name" value="Aspartate carbamoyltransferase regulatory subunit, C-terminal domain"/>
    <property type="match status" value="1"/>
</dbReference>
<dbReference type="Gene3D" id="3.30.70.140">
    <property type="entry name" value="Aspartate carbamoyltransferase regulatory subunit, N-terminal domain"/>
    <property type="match status" value="1"/>
</dbReference>
<dbReference type="HAMAP" id="MF_00002">
    <property type="entry name" value="Asp_carb_tr_reg"/>
    <property type="match status" value="1"/>
</dbReference>
<dbReference type="InterPro" id="IPR020545">
    <property type="entry name" value="Asp_carbamoyltransf_reg_N"/>
</dbReference>
<dbReference type="InterPro" id="IPR002801">
    <property type="entry name" value="Asp_carbamoylTrfase_reg"/>
</dbReference>
<dbReference type="InterPro" id="IPR020542">
    <property type="entry name" value="Asp_carbamoyltrfase_reg_C"/>
</dbReference>
<dbReference type="InterPro" id="IPR036792">
    <property type="entry name" value="Asp_carbatrfase_reg_C_sf"/>
</dbReference>
<dbReference type="InterPro" id="IPR036793">
    <property type="entry name" value="Asp_carbatrfase_reg_N_sf"/>
</dbReference>
<dbReference type="NCBIfam" id="TIGR00240">
    <property type="entry name" value="ATCase_reg"/>
    <property type="match status" value="1"/>
</dbReference>
<dbReference type="PANTHER" id="PTHR35805">
    <property type="entry name" value="ASPARTATE CARBAMOYLTRANSFERASE REGULATORY CHAIN"/>
    <property type="match status" value="1"/>
</dbReference>
<dbReference type="PANTHER" id="PTHR35805:SF1">
    <property type="entry name" value="ASPARTATE CARBAMOYLTRANSFERASE REGULATORY CHAIN"/>
    <property type="match status" value="1"/>
</dbReference>
<dbReference type="Pfam" id="PF01948">
    <property type="entry name" value="PyrI"/>
    <property type="match status" value="1"/>
</dbReference>
<dbReference type="Pfam" id="PF02748">
    <property type="entry name" value="PyrI_C"/>
    <property type="match status" value="1"/>
</dbReference>
<dbReference type="SUPFAM" id="SSF57825">
    <property type="entry name" value="Aspartate carbamoyltransferase, Regulatory-chain, C-terminal domain"/>
    <property type="match status" value="1"/>
</dbReference>
<dbReference type="SUPFAM" id="SSF54893">
    <property type="entry name" value="Aspartate carbamoyltransferase, Regulatory-chain, N-terminal domain"/>
    <property type="match status" value="1"/>
</dbReference>
<organism>
    <name type="scientific">Aliivibrio fischeri (strain MJ11)</name>
    <name type="common">Vibrio fischeri</name>
    <dbReference type="NCBI Taxonomy" id="388396"/>
    <lineage>
        <taxon>Bacteria</taxon>
        <taxon>Pseudomonadati</taxon>
        <taxon>Pseudomonadota</taxon>
        <taxon>Gammaproteobacteria</taxon>
        <taxon>Vibrionales</taxon>
        <taxon>Vibrionaceae</taxon>
        <taxon>Aliivibrio</taxon>
    </lineage>
</organism>
<sequence>MANKTQLRVEAINNGTVIDHIPANIGIKVLKLFQMDKSAERVTVGLNLPSSALGAKDLLKIENTFITPEQASKLALYAPHATVNQIENYEVVKKIPLVLPEQITGVFECPNSNCITHGEPVDSSFKVLTKKEDIHLKCKYCEKVYSREVVTDLN</sequence>
<accession>B5F9P8</accession>
<name>PYRI_ALIFM</name>
<evidence type="ECO:0000255" key="1">
    <source>
        <dbReference type="HAMAP-Rule" id="MF_00002"/>
    </source>
</evidence>